<proteinExistence type="evidence at protein level"/>
<comment type="function">
    <text evidence="2">Omega-conotoxins act at presynaptic membranes, they bind and block voltage-gated calcium channels (Cav). This toxin selectively and potently inhibits depolarization-activated rat Cav2.2/CACNA1B currents (IC(50)=89 nM), when coexpressed with alpha-2/delta-1 (CACNA2D1) and beta-3 (CACNB3) subunits. In vivo, is lethal to fish and displays potent analgesic activity in mice pain models of hot plate and acetic acid writhing but has fewer side effects on mouse motor function and lower toxicity in goldfish. Shows higher or similar analgesic activity in the pain models mentioned above compared to MVIIA, and lower side effects. In addition, it blocks Cav2.2/CACNA1B more rapidly than MVIIA and also dissociates more rapidly.</text>
</comment>
<comment type="subcellular location">
    <subcellularLocation>
        <location evidence="5">Secreted</location>
    </subcellularLocation>
</comment>
<comment type="tissue specificity">
    <text evidence="5">Expressed by the venom duct.</text>
</comment>
<comment type="domain">
    <text evidence="2">The presence of a 'disulfide through disulfide knot' structurally defines this protein as a knottin.</text>
</comment>
<comment type="domain">
    <text evidence="4">The cysteine framework is VI/VII (C-C-CC-C-C).</text>
</comment>
<comment type="toxic dose">
    <text evidence="2">LD(50) is 0.31 (0.22-0.41) mg/kg by intramuscular injection into goldfish (after 4 hours).</text>
</comment>
<comment type="miscellaneous">
    <text evidence="2">Shows very weak activity on Cav2.1/CACNA1A (27.36% current inhibition at 10 uM) and Cav1.1/CACNA1S (2.82% current inhibition at 10 uM), and no activity on sodium (Nav) and potassium (Kv) channels in rat DRG neurons.</text>
</comment>
<comment type="similarity">
    <text evidence="4">Belongs to the conotoxin O1 superfamily.</text>
</comment>
<reference key="1">
    <citation type="journal article" date="2011" name="BMC Genomics">
        <title>Characterization of the Conus bullatus genome and its venom-duct transcriptome.</title>
        <authorList>
            <person name="Hu H."/>
            <person name="Bandyopadhyay P.K."/>
            <person name="Olivera B.M."/>
            <person name="Yandell M."/>
        </authorList>
    </citation>
    <scope>NUCLEOTIDE SEQUENCE [MRNA]</scope>
    <source>
        <tissue>Venom duct</tissue>
    </source>
</reference>
<reference key="2">
    <citation type="journal article" date="2021" name="Acta Pharm. Sin. B (APSB)">
        <title>A novel omega-conotoxin Bu8 inhibiting N-type voltage-gated calcium channels displays potent analgesic activity.</title>
        <authorList>
            <person name="Chen J."/>
            <person name="Liu X."/>
            <person name="Yu S."/>
            <person name="Liu J."/>
            <person name="Chen R."/>
            <person name="Zhang Y."/>
            <person name="Jiang L."/>
            <person name="Dai Q."/>
        </authorList>
    </citation>
    <scope>FUNCTION</scope>
    <scope>SYNTHESIS OF 25-49</scope>
    <scope>PROBABLE AMIDATION AT CYS-49</scope>
    <scope>DISULFIDE BOND</scope>
    <scope>STRUCTURE BY NMR OF 25-49</scope>
    <scope>MUTAGENESIS OF ARG-27; SER-30; SER-31; ARG-33; THR-35; SER-36 AND ASN-46</scope>
    <scope>TOXIC DOSE</scope>
</reference>
<dbReference type="PDB" id="5ZNU">
    <property type="method" value="NMR"/>
    <property type="chains" value="A=25-49"/>
</dbReference>
<dbReference type="PDBsum" id="5ZNU"/>
<dbReference type="BMRB" id="P0CY66"/>
<dbReference type="SMR" id="P0CY66"/>
<dbReference type="TCDB" id="8.B.4.1.11">
    <property type="family name" value="the conotoxin t (conotoxin t) family"/>
</dbReference>
<dbReference type="GO" id="GO:0005576">
    <property type="term" value="C:extracellular region"/>
    <property type="evidence" value="ECO:0007669"/>
    <property type="project" value="UniProtKB-SubCell"/>
</dbReference>
<dbReference type="GO" id="GO:0005246">
    <property type="term" value="F:calcium channel regulator activity"/>
    <property type="evidence" value="ECO:0007669"/>
    <property type="project" value="UniProtKB-KW"/>
</dbReference>
<dbReference type="GO" id="GO:0008200">
    <property type="term" value="F:ion channel inhibitor activity"/>
    <property type="evidence" value="ECO:0007669"/>
    <property type="project" value="InterPro"/>
</dbReference>
<dbReference type="GO" id="GO:0090729">
    <property type="term" value="F:toxin activity"/>
    <property type="evidence" value="ECO:0007669"/>
    <property type="project" value="UniProtKB-KW"/>
</dbReference>
<dbReference type="InterPro" id="IPR012321">
    <property type="entry name" value="Conotoxin_omega-typ_CS"/>
</dbReference>
<dbReference type="SUPFAM" id="SSF57059">
    <property type="entry name" value="omega toxin-like"/>
    <property type="match status" value="1"/>
</dbReference>
<dbReference type="PROSITE" id="PS60004">
    <property type="entry name" value="OMEGA_CONOTOXIN"/>
    <property type="match status" value="1"/>
</dbReference>
<protein>
    <recommendedName>
        <fullName evidence="3">Omega-conotoxin Bu8</fullName>
    </recommendedName>
</protein>
<sequence>AEDSRGTQLHRALRKATKLSESTRCKRKGSSCRRTSYDCCTGSCRNGKCG</sequence>
<organism>
    <name type="scientific">Conus bullatus</name>
    <name type="common">Bubble cone</name>
    <dbReference type="NCBI Taxonomy" id="89438"/>
    <lineage>
        <taxon>Eukaryota</taxon>
        <taxon>Metazoa</taxon>
        <taxon>Spiralia</taxon>
        <taxon>Lophotrochozoa</taxon>
        <taxon>Mollusca</taxon>
        <taxon>Gastropoda</taxon>
        <taxon>Caenogastropoda</taxon>
        <taxon>Neogastropoda</taxon>
        <taxon>Conoidea</taxon>
        <taxon>Conidae</taxon>
        <taxon>Conus</taxon>
        <taxon>Textilia</taxon>
    </lineage>
</organism>
<keyword id="KW-0002">3D-structure</keyword>
<keyword id="KW-0027">Amidation</keyword>
<keyword id="KW-0108">Calcium channel impairing toxin</keyword>
<keyword id="KW-1015">Disulfide bond</keyword>
<keyword id="KW-0872">Ion channel impairing toxin</keyword>
<keyword id="KW-0960">Knottin</keyword>
<keyword id="KW-0528">Neurotoxin</keyword>
<keyword id="KW-0964">Secreted</keyword>
<keyword id="KW-0732">Signal</keyword>
<keyword id="KW-0800">Toxin</keyword>
<keyword id="KW-1218">Voltage-gated calcium channel impairing toxin</keyword>
<accession>P0CY66</accession>
<name>O168_CONBU</name>
<feature type="signal peptide" evidence="1">
    <location>
        <begin position="1" status="less than"/>
        <end position="1"/>
    </location>
</feature>
<feature type="propeptide" id="PRO_0000409948" evidence="6">
    <location>
        <begin position="2"/>
        <end position="24"/>
    </location>
</feature>
<feature type="peptide" id="PRO_0000409949" description="Omega-conotoxin Bu8" evidence="6">
    <location>
        <begin position="25"/>
        <end position="49"/>
    </location>
</feature>
<feature type="site" description="Key residue for inhibiting Cav2.2/CACNA1B" evidence="2">
    <location>
        <position position="27"/>
    </location>
</feature>
<feature type="site" description="Key residue for inhibiting Cav2.2/CACNA1B" evidence="2">
    <location>
        <position position="33"/>
    </location>
</feature>
<feature type="site" description="Key residue for inhibiting Cav2.2/CACNA1B" evidence="2">
    <location>
        <position position="35"/>
    </location>
</feature>
<feature type="modified residue" description="Cysteine amide" evidence="6">
    <location>
        <position position="49"/>
    </location>
</feature>
<feature type="disulfide bond" evidence="2">
    <location>
        <begin position="25"/>
        <end position="40"/>
    </location>
</feature>
<feature type="disulfide bond" evidence="2">
    <location>
        <begin position="32"/>
        <end position="44"/>
    </location>
</feature>
<feature type="disulfide bond" evidence="2">
    <location>
        <begin position="39"/>
        <end position="49"/>
    </location>
</feature>
<feature type="mutagenesis site" description="Decrease in ability to inhibit Cav2.2/CACNA1B." evidence="2">
    <original>R</original>
    <variation>A</variation>
    <location>
        <position position="27"/>
    </location>
</feature>
<feature type="mutagenesis site" description="Small decrease in ability to inhibit Cav2.2/CACNA1B." evidence="2">
    <original>R</original>
    <variation>G</variation>
    <location>
        <position position="27"/>
    </location>
</feature>
<feature type="mutagenesis site" description="Small increase in ability to inhibit Cav2.2/CACNA1B." evidence="2">
    <original>S</original>
    <variation>A</variation>
    <location>
        <position position="30"/>
    </location>
</feature>
<feature type="mutagenesis site" description="No change in ability to inhibit Cav2.2/CACNA1B." evidence="2">
    <original>S</original>
    <variation>A</variation>
    <location>
        <position position="31"/>
    </location>
</feature>
<feature type="mutagenesis site" description="Important decrease in ability to inhibit Cav2.2/CACNA1B." evidence="2">
    <original>R</original>
    <variation>A</variation>
    <location>
        <position position="33"/>
    </location>
</feature>
<feature type="mutagenesis site" description="Small increase in ability to inhibit Cav2.2/CACNA1B." evidence="2">
    <original>R</original>
    <variation>S</variation>
    <location>
        <position position="33"/>
    </location>
</feature>
<feature type="mutagenesis site" description="Important decrease in ability to inhibit Cav2.2/CACNA1B." evidence="2">
    <original>T</original>
    <variation>A</variation>
    <location>
        <position position="35"/>
    </location>
</feature>
<feature type="mutagenesis site" description="Decrease in ability to inhibit Cav2.2/CACNA1B." evidence="2">
    <original>T</original>
    <variation>L</variation>
    <location>
        <position position="35"/>
    </location>
</feature>
<feature type="mutagenesis site" description="Small decrease in ability to inhibit Cav2.2/CACNA1B." evidence="2">
    <original>S</original>
    <variation>A</variation>
    <location>
        <position position="36"/>
    </location>
</feature>
<feature type="mutagenesis site" description="No change in ability to inhibit Cav2.2/CACNA1B." evidence="2">
    <original>S</original>
    <variation>M</variation>
    <location>
        <position position="36"/>
    </location>
</feature>
<feature type="mutagenesis site" description="No change in ability to inhibit Cav2.2/CACNA1B." evidence="2">
    <original>N</original>
    <variation>A</variation>
    <location>
        <position position="46"/>
    </location>
</feature>
<feature type="mutagenesis site" description="Small decrease in ability to inhibit Cav2.2/CACNA1B." evidence="2">
    <original>N</original>
    <variation>S</variation>
    <location>
        <position position="46"/>
    </location>
</feature>
<feature type="non-terminal residue">
    <location>
        <position position="1"/>
    </location>
</feature>
<feature type="strand" evidence="7">
    <location>
        <begin position="39"/>
        <end position="42"/>
    </location>
</feature>
<evidence type="ECO:0000255" key="1"/>
<evidence type="ECO:0000269" key="2">
    <source>
    </source>
</evidence>
<evidence type="ECO:0000303" key="3">
    <source>
    </source>
</evidence>
<evidence type="ECO:0000305" key="4"/>
<evidence type="ECO:0000305" key="5">
    <source>
    </source>
</evidence>
<evidence type="ECO:0000305" key="6">
    <source>
    </source>
</evidence>
<evidence type="ECO:0007829" key="7">
    <source>
        <dbReference type="PDB" id="5ZNU"/>
    </source>
</evidence>